<evidence type="ECO:0000255" key="1">
    <source>
        <dbReference type="HAMAP-Rule" id="MF_01802"/>
    </source>
</evidence>
<evidence type="ECO:0000256" key="2">
    <source>
        <dbReference type="SAM" id="MobiDB-lite"/>
    </source>
</evidence>
<dbReference type="EMBL" id="BX950851">
    <property type="protein sequence ID" value="CAG75447.1"/>
    <property type="molecule type" value="Genomic_DNA"/>
</dbReference>
<dbReference type="SMR" id="Q6D446"/>
<dbReference type="STRING" id="218491.ECA2548"/>
<dbReference type="KEGG" id="eca:ECA2548"/>
<dbReference type="eggNOG" id="COG3095">
    <property type="taxonomic scope" value="Bacteria"/>
</dbReference>
<dbReference type="HOGENOM" id="CLU_1146408_0_0_6"/>
<dbReference type="Proteomes" id="UP000007966">
    <property type="component" value="Chromosome"/>
</dbReference>
<dbReference type="GO" id="GO:0005737">
    <property type="term" value="C:cytoplasm"/>
    <property type="evidence" value="ECO:0007669"/>
    <property type="project" value="UniProtKB-UniRule"/>
</dbReference>
<dbReference type="GO" id="GO:0009295">
    <property type="term" value="C:nucleoid"/>
    <property type="evidence" value="ECO:0007669"/>
    <property type="project" value="UniProtKB-SubCell"/>
</dbReference>
<dbReference type="GO" id="GO:0051301">
    <property type="term" value="P:cell division"/>
    <property type="evidence" value="ECO:0007669"/>
    <property type="project" value="UniProtKB-KW"/>
</dbReference>
<dbReference type="GO" id="GO:0030261">
    <property type="term" value="P:chromosome condensation"/>
    <property type="evidence" value="ECO:0007669"/>
    <property type="project" value="UniProtKB-KW"/>
</dbReference>
<dbReference type="GO" id="GO:0007059">
    <property type="term" value="P:chromosome segregation"/>
    <property type="evidence" value="ECO:0007669"/>
    <property type="project" value="UniProtKB-UniRule"/>
</dbReference>
<dbReference type="GO" id="GO:0006260">
    <property type="term" value="P:DNA replication"/>
    <property type="evidence" value="ECO:0007669"/>
    <property type="project" value="UniProtKB-UniRule"/>
</dbReference>
<dbReference type="Gene3D" id="1.10.10.2250">
    <property type="match status" value="1"/>
</dbReference>
<dbReference type="Gene3D" id="1.10.10.2260">
    <property type="entry name" value="MukE-like family, C-terminal domain"/>
    <property type="match status" value="1"/>
</dbReference>
<dbReference type="HAMAP" id="MF_01802">
    <property type="entry name" value="MukE"/>
    <property type="match status" value="1"/>
</dbReference>
<dbReference type="InterPro" id="IPR042037">
    <property type="entry name" value="MukE_C"/>
</dbReference>
<dbReference type="InterPro" id="IPR042038">
    <property type="entry name" value="MukE_N"/>
</dbReference>
<dbReference type="InterPro" id="IPR007385">
    <property type="entry name" value="Scp_MukE"/>
</dbReference>
<dbReference type="NCBIfam" id="NF003602">
    <property type="entry name" value="PRK05256.1"/>
    <property type="match status" value="1"/>
</dbReference>
<dbReference type="Pfam" id="PF04288">
    <property type="entry name" value="MukE"/>
    <property type="match status" value="1"/>
</dbReference>
<gene>
    <name evidence="1" type="primary">mukE</name>
    <name type="ordered locus">ECA2548</name>
</gene>
<keyword id="KW-0131">Cell cycle</keyword>
<keyword id="KW-0132">Cell division</keyword>
<keyword id="KW-0159">Chromosome partition</keyword>
<keyword id="KW-0963">Cytoplasm</keyword>
<keyword id="KW-0226">DNA condensation</keyword>
<keyword id="KW-1185">Reference proteome</keyword>
<accession>Q6D446</accession>
<feature type="chain" id="PRO_0000206795" description="Chromosome partition protein MukE">
    <location>
        <begin position="1"/>
        <end position="231"/>
    </location>
</feature>
<feature type="region of interest" description="Disordered" evidence="2">
    <location>
        <begin position="195"/>
        <end position="231"/>
    </location>
</feature>
<feature type="compositionally biased region" description="Acidic residues" evidence="2">
    <location>
        <begin position="213"/>
        <end position="231"/>
    </location>
</feature>
<name>MUKE_PECAS</name>
<proteinExistence type="inferred from homology"/>
<protein>
    <recommendedName>
        <fullName evidence="1">Chromosome partition protein MukE</fullName>
    </recommendedName>
</protein>
<sequence>MPVKLATALSNNLFPALDSQLRAGRHIGIEELENHVFLMDFQEVLEEFYSRYNVELIRAPEGFFYLRPRSTTLIPRSVLSELDMMVGKILCYLYLSPERLAHEGIFSQQELYEELLSLADESKLLKLVNQRSTGSDLDRQKLQEKVRTSLNRLRRLGMIYFMGNDSSKFRITESVFRFGADVRSGDDAREAQLRMIRDGEAMPVEGSLSLKDDSDDNDRTDDTAPETGEDE</sequence>
<comment type="function">
    <text evidence="1">Involved in chromosome condensation, segregation and cell cycle progression. May participate in facilitating chromosome segregation by condensation DNA from both sides of a centrally located replisome during cell division. Probably acts via its interaction with MukB and MukF.</text>
</comment>
<comment type="subunit">
    <text evidence="1">Interacts, and probably forms a ternary complex, with MukF and MukB. The complex formation is stimulated by calcium or magnesium.</text>
</comment>
<comment type="subcellular location">
    <subcellularLocation>
        <location evidence="1">Cytoplasm</location>
        <location evidence="1">Nucleoid</location>
    </subcellularLocation>
    <text evidence="1">Restricted to the nucleoid region.</text>
</comment>
<comment type="similarity">
    <text evidence="1">Belongs to the MukE family.</text>
</comment>
<reference key="1">
    <citation type="journal article" date="2004" name="Proc. Natl. Acad. Sci. U.S.A.">
        <title>Genome sequence of the enterobacterial phytopathogen Erwinia carotovora subsp. atroseptica and characterization of virulence factors.</title>
        <authorList>
            <person name="Bell K.S."/>
            <person name="Sebaihia M."/>
            <person name="Pritchard L."/>
            <person name="Holden M.T.G."/>
            <person name="Hyman L.J."/>
            <person name="Holeva M.C."/>
            <person name="Thomson N.R."/>
            <person name="Bentley S.D."/>
            <person name="Churcher L.J.C."/>
            <person name="Mungall K."/>
            <person name="Atkin R."/>
            <person name="Bason N."/>
            <person name="Brooks K."/>
            <person name="Chillingworth T."/>
            <person name="Clark K."/>
            <person name="Doggett J."/>
            <person name="Fraser A."/>
            <person name="Hance Z."/>
            <person name="Hauser H."/>
            <person name="Jagels K."/>
            <person name="Moule S."/>
            <person name="Norbertczak H."/>
            <person name="Ormond D."/>
            <person name="Price C."/>
            <person name="Quail M.A."/>
            <person name="Sanders M."/>
            <person name="Walker D."/>
            <person name="Whitehead S."/>
            <person name="Salmond G.P.C."/>
            <person name="Birch P.R.J."/>
            <person name="Parkhill J."/>
            <person name="Toth I.K."/>
        </authorList>
    </citation>
    <scope>NUCLEOTIDE SEQUENCE [LARGE SCALE GENOMIC DNA]</scope>
    <source>
        <strain>SCRI 1043 / ATCC BAA-672</strain>
    </source>
</reference>
<organism>
    <name type="scientific">Pectobacterium atrosepticum (strain SCRI 1043 / ATCC BAA-672)</name>
    <name type="common">Erwinia carotovora subsp. atroseptica</name>
    <dbReference type="NCBI Taxonomy" id="218491"/>
    <lineage>
        <taxon>Bacteria</taxon>
        <taxon>Pseudomonadati</taxon>
        <taxon>Pseudomonadota</taxon>
        <taxon>Gammaproteobacteria</taxon>
        <taxon>Enterobacterales</taxon>
        <taxon>Pectobacteriaceae</taxon>
        <taxon>Pectobacterium</taxon>
    </lineage>
</organism>